<protein>
    <recommendedName>
        <fullName>Capsid protein</fullName>
    </recommendedName>
    <alternativeName>
        <fullName>Coat protein</fullName>
        <shortName>CP</shortName>
    </alternativeName>
</protein>
<reference key="1">
    <citation type="submission" date="1994-01" db="EMBL/GenBank/DDBJ databases">
        <title>Characterization of a tomato yellow leaf curl virus isolated from southeast Spain (almeria).</title>
        <authorList>
            <person name="Reina J."/>
            <person name="Cuadrado-Gomez I.M."/>
            <person name="Jimenez J."/>
            <person name="Bejarano E.R."/>
        </authorList>
    </citation>
    <scope>NUCLEOTIDE SEQUENCE [GENOMIC DNA]</scope>
</reference>
<proteinExistence type="inferred from homology"/>
<sequence>MPKRTGDILMSSPLSKFRRKLNFDSPYTSRAAAPTVQGIKRRSWTYRPMYRKPRMYRMYRSPDVPFGCEGPCKVQSYEQRDDVKHTGVVRCVSDVTRGSGITHRVGKRFCIKSIYILGKIWMDENIKKQNHTNQVMFFLVRDRRPYGTSPMDFGQVFNMFDNEPSTATVKNDLRDRYQVMRKFHATVVGGPSGMKEQCLLKRFFKVNTHVVYNHQEQAKYENHTENALLLYMACTHASNPVYATLKIRIYFYDAVTN</sequence>
<name>CAPSD_TYCS2</name>
<organismHost>
    <name type="scientific">Solanum lycopersicum</name>
    <name type="common">Tomato</name>
    <name type="synonym">Lycopersicon esculentum</name>
    <dbReference type="NCBI Taxonomy" id="4081"/>
</organismHost>
<dbReference type="EMBL" id="L27708">
    <property type="protein sequence ID" value="AAA47952.1"/>
    <property type="molecule type" value="Genomic_DNA"/>
</dbReference>
<dbReference type="SMR" id="Q67617"/>
<dbReference type="Proteomes" id="UP000008266">
    <property type="component" value="Genome"/>
</dbReference>
<dbReference type="GO" id="GO:0043657">
    <property type="term" value="C:host cell"/>
    <property type="evidence" value="ECO:0007669"/>
    <property type="project" value="GOC"/>
</dbReference>
<dbReference type="GO" id="GO:0042025">
    <property type="term" value="C:host cell nucleus"/>
    <property type="evidence" value="ECO:0007669"/>
    <property type="project" value="UniProtKB-SubCell"/>
</dbReference>
<dbReference type="GO" id="GO:0039615">
    <property type="term" value="C:T=1 icosahedral viral capsid"/>
    <property type="evidence" value="ECO:0007669"/>
    <property type="project" value="UniProtKB-KW"/>
</dbReference>
<dbReference type="GO" id="GO:0003677">
    <property type="term" value="F:DNA binding"/>
    <property type="evidence" value="ECO:0007669"/>
    <property type="project" value="UniProtKB-KW"/>
</dbReference>
<dbReference type="GO" id="GO:0005198">
    <property type="term" value="F:structural molecule activity"/>
    <property type="evidence" value="ECO:0007669"/>
    <property type="project" value="InterPro"/>
</dbReference>
<dbReference type="GO" id="GO:0008270">
    <property type="term" value="F:zinc ion binding"/>
    <property type="evidence" value="ECO:0007669"/>
    <property type="project" value="UniProtKB-KW"/>
</dbReference>
<dbReference type="GO" id="GO:0046718">
    <property type="term" value="P:symbiont entry into host cell"/>
    <property type="evidence" value="ECO:0007669"/>
    <property type="project" value="UniProtKB-KW"/>
</dbReference>
<dbReference type="GO" id="GO:0075732">
    <property type="term" value="P:viral penetration into host nucleus"/>
    <property type="evidence" value="ECO:0007669"/>
    <property type="project" value="UniProtKB-KW"/>
</dbReference>
<dbReference type="Gene3D" id="2.60.120.20">
    <property type="match status" value="1"/>
</dbReference>
<dbReference type="InterPro" id="IPR000650">
    <property type="entry name" value="Gem_coat_AR1"/>
</dbReference>
<dbReference type="InterPro" id="IPR000263">
    <property type="entry name" value="GV_A/BR1_coat"/>
</dbReference>
<dbReference type="InterPro" id="IPR029053">
    <property type="entry name" value="Viral_coat"/>
</dbReference>
<dbReference type="Pfam" id="PF00844">
    <property type="entry name" value="Gemini_coat"/>
    <property type="match status" value="1"/>
</dbReference>
<dbReference type="PRINTS" id="PR00224">
    <property type="entry name" value="GEMCOATAR1"/>
</dbReference>
<dbReference type="PRINTS" id="PR00223">
    <property type="entry name" value="GEMCOATARBR1"/>
</dbReference>
<comment type="function">
    <text evidence="1">Encapsidates the viral genome into characteristic twinned ('geminate') particles. Binds the genomic viral ssDNA and shuttles it into and out of the cell nucleus. Plays a role in protection of the genome from degradation, virus acquisition and transmission by insect vectors, infectivity, and systemic movement. The CP of monopartite geminiviruses is absolutely essential for virus movement (By similarity).</text>
</comment>
<comment type="subunit">
    <text evidence="1">Homomultimer. Binds to single-stranded and double-stranded viral DNA. Interacts (via nuclear localization signals) with host importin alpha-1a (By similarity).</text>
</comment>
<comment type="subcellular location">
    <subcellularLocation>
        <location evidence="3">Virion</location>
    </subcellularLocation>
    <subcellularLocation>
        <location evidence="1">Host nucleus</location>
    </subcellularLocation>
    <text evidence="1">It is actively transported into the host cell nucleus. It may be exported out of the nucleus through a nuclear export signal for cell-to-cell movement and spread (By similarity).</text>
</comment>
<comment type="similarity">
    <text evidence="3">Belongs to the geminiviridae capsid protein family.</text>
</comment>
<organism>
    <name type="scientific">Tomato yellow leaf curl Sardinia virus (isolate Spain-2)</name>
    <name type="common">TYLCSV</name>
    <dbReference type="NCBI Taxonomy" id="221538"/>
    <lineage>
        <taxon>Viruses</taxon>
        <taxon>Monodnaviria</taxon>
        <taxon>Shotokuvirae</taxon>
        <taxon>Cressdnaviricota</taxon>
        <taxon>Repensiviricetes</taxon>
        <taxon>Geplafuvirales</taxon>
        <taxon>Geminiviridae</taxon>
        <taxon>Begomovirus</taxon>
        <taxon>Tomato yellow leaf curl Sardinia virus</taxon>
    </lineage>
</organism>
<feature type="chain" id="PRO_0000320109" description="Capsid protein">
    <location>
        <begin position="1"/>
        <end position="257"/>
    </location>
</feature>
<feature type="zinc finger region" evidence="2">
    <location>
        <begin position="68"/>
        <end position="85"/>
    </location>
</feature>
<feature type="short sequence motif" description="Bipartite nuclear localization signal" evidence="2">
    <location>
        <begin position="3"/>
        <end position="20"/>
    </location>
</feature>
<feature type="short sequence motif" description="Nuclear localization signal" evidence="2">
    <location>
        <begin position="40"/>
        <end position="54"/>
    </location>
</feature>
<feature type="short sequence motif" description="Nuclear export signal" evidence="2">
    <location>
        <begin position="101"/>
        <end position="122"/>
    </location>
</feature>
<feature type="short sequence motif" description="Bipartite nuclear localization signal" evidence="2">
    <location>
        <begin position="201"/>
        <end position="248"/>
    </location>
</feature>
<gene>
    <name type="ORF">V1</name>
</gene>
<accession>Q67617</accession>
<evidence type="ECO:0000250" key="1"/>
<evidence type="ECO:0000255" key="2"/>
<evidence type="ECO:0000305" key="3"/>
<keyword id="KW-0167">Capsid protein</keyword>
<keyword id="KW-0238">DNA-binding</keyword>
<keyword id="KW-1048">Host nucleus</keyword>
<keyword id="KW-0479">Metal-binding</keyword>
<keyword id="KW-1140">T=1 icosahedral capsid protein</keyword>
<keyword id="KW-1163">Viral penetration into host nucleus</keyword>
<keyword id="KW-0946">Virion</keyword>
<keyword id="KW-1160">Virus entry into host cell</keyword>
<keyword id="KW-0862">Zinc</keyword>
<keyword id="KW-0863">Zinc-finger</keyword>